<organism>
    <name type="scientific">Xanthomonas axonopodis pv. citri (strain 306)</name>
    <dbReference type="NCBI Taxonomy" id="190486"/>
    <lineage>
        <taxon>Bacteria</taxon>
        <taxon>Pseudomonadati</taxon>
        <taxon>Pseudomonadota</taxon>
        <taxon>Gammaproteobacteria</taxon>
        <taxon>Lysobacterales</taxon>
        <taxon>Lysobacteraceae</taxon>
        <taxon>Xanthomonas</taxon>
    </lineage>
</organism>
<feature type="chain" id="PRO_0000059272" description="Cellulose synthase catalytic subunit [UDP-forming]">
    <location>
        <begin position="1"/>
        <end position="729"/>
    </location>
</feature>
<feature type="transmembrane region" description="Helical" evidence="2">
    <location>
        <begin position="30"/>
        <end position="50"/>
    </location>
</feature>
<feature type="transmembrane region" description="Helical" evidence="2">
    <location>
        <begin position="110"/>
        <end position="130"/>
    </location>
</feature>
<feature type="transmembrane region" description="Helical" evidence="2">
    <location>
        <begin position="171"/>
        <end position="191"/>
    </location>
</feature>
<feature type="transmembrane region" description="Helical" evidence="2">
    <location>
        <begin position="405"/>
        <end position="425"/>
    </location>
</feature>
<feature type="transmembrane region" description="Helical" evidence="2">
    <location>
        <begin position="427"/>
        <end position="447"/>
    </location>
</feature>
<feature type="transmembrane region" description="Helical" evidence="2">
    <location>
        <begin position="520"/>
        <end position="540"/>
    </location>
</feature>
<feature type="transmembrane region" description="Helical" evidence="2">
    <location>
        <begin position="549"/>
        <end position="569"/>
    </location>
</feature>
<feature type="transmembrane region" description="Helical" evidence="2">
    <location>
        <begin position="610"/>
        <end position="630"/>
    </location>
</feature>
<feature type="domain" description="PilZ">
    <location>
        <begin position="575"/>
        <end position="671"/>
    </location>
</feature>
<feature type="region of interest" description="Catalytic subdomain A">
    <location>
        <begin position="151"/>
        <end position="244"/>
    </location>
</feature>
<feature type="region of interest" description="Catalytic subdomain B">
    <location>
        <begin position="321"/>
        <end position="381"/>
    </location>
</feature>
<feature type="active site" evidence="2">
    <location>
        <position position="193"/>
    </location>
</feature>
<feature type="active site" evidence="2">
    <location>
        <position position="337"/>
    </location>
</feature>
<feature type="binding site" evidence="2">
    <location>
        <position position="240"/>
    </location>
    <ligand>
        <name>substrate</name>
    </ligand>
</feature>
<feature type="binding site" evidence="2">
    <location>
        <position position="242"/>
    </location>
    <ligand>
        <name>substrate</name>
    </ligand>
</feature>
<proteinExistence type="inferred from homology"/>
<reference key="1">
    <citation type="journal article" date="2002" name="Nature">
        <title>Comparison of the genomes of two Xanthomonas pathogens with differing host specificities.</title>
        <authorList>
            <person name="da Silva A.C.R."/>
            <person name="Ferro J.A."/>
            <person name="Reinach F.C."/>
            <person name="Farah C.S."/>
            <person name="Furlan L.R."/>
            <person name="Quaggio R.B."/>
            <person name="Monteiro-Vitorello C.B."/>
            <person name="Van Sluys M.A."/>
            <person name="Almeida N.F. Jr."/>
            <person name="Alves L.M.C."/>
            <person name="do Amaral A.M."/>
            <person name="Bertolini M.C."/>
            <person name="Camargo L.E.A."/>
            <person name="Camarotte G."/>
            <person name="Cannavan F."/>
            <person name="Cardozo J."/>
            <person name="Chambergo F."/>
            <person name="Ciapina L.P."/>
            <person name="Cicarelli R.M.B."/>
            <person name="Coutinho L.L."/>
            <person name="Cursino-Santos J.R."/>
            <person name="El-Dorry H."/>
            <person name="Faria J.B."/>
            <person name="Ferreira A.J.S."/>
            <person name="Ferreira R.C.C."/>
            <person name="Ferro M.I.T."/>
            <person name="Formighieri E.F."/>
            <person name="Franco M.C."/>
            <person name="Greggio C.C."/>
            <person name="Gruber A."/>
            <person name="Katsuyama A.M."/>
            <person name="Kishi L.T."/>
            <person name="Leite R.P."/>
            <person name="Lemos E.G.M."/>
            <person name="Lemos M.V.F."/>
            <person name="Locali E.C."/>
            <person name="Machado M.A."/>
            <person name="Madeira A.M.B.N."/>
            <person name="Martinez-Rossi N.M."/>
            <person name="Martins E.C."/>
            <person name="Meidanis J."/>
            <person name="Menck C.F.M."/>
            <person name="Miyaki C.Y."/>
            <person name="Moon D.H."/>
            <person name="Moreira L.M."/>
            <person name="Novo M.T.M."/>
            <person name="Okura V.K."/>
            <person name="Oliveira M.C."/>
            <person name="Oliveira V.R."/>
            <person name="Pereira H.A."/>
            <person name="Rossi A."/>
            <person name="Sena J.A.D."/>
            <person name="Silva C."/>
            <person name="de Souza R.F."/>
            <person name="Spinola L.A.F."/>
            <person name="Takita M.A."/>
            <person name="Tamura R.E."/>
            <person name="Teixeira E.C."/>
            <person name="Tezza R.I.D."/>
            <person name="Trindade dos Santos M."/>
            <person name="Truffi D."/>
            <person name="Tsai S.M."/>
            <person name="White F.F."/>
            <person name="Setubal J.C."/>
            <person name="Kitajima J.P."/>
        </authorList>
    </citation>
    <scope>NUCLEOTIDE SEQUENCE [LARGE SCALE GENOMIC DNA]</scope>
    <source>
        <strain>306</strain>
    </source>
</reference>
<sequence>MPLVVPHAAMPEGRLMTAASRRSASPLPTLATWALWLLGALLLVFVVAVPMDVTQQLVFSGVLFAVALAVRNRGGRVVILMMMGMSLAVSCRYIWWRMTQTMGVGSAVDFILGLGLLGAELYAFVILVLGYFQVLWPLNRKPVPLPADQRLWPSVDVFIPTYNEPLSVVRTTVLAASVIDWPAGKITIHLLDDGRRDEFRAFCAEVGINYVTRTNNAHAKAGNINAALKKCSGDYVAIFDCDHIPTRSFLQVAMGWFLHDTKLALVQMPHYFFSPDPFERNLDTHGKVPNEGELFYGLLQDGNDQWNATFFCGSCAVIKRTALEEVGGVAVETVTEDAHTALKLQRRGYRTAYLAVPQAAGLATESLSGHVAQRIRWARGMAQIARIDNPLLGRGLKLSQRLCYLNAMLHFFYGVPRIIYLTAPLAYLFFGAHVIQASALMILAYALPHILQANLTNLRVQSRFRHLLWNEVYETTLAWYIFRPTLVALLNPKLGKFNVTPKGGLVARSYFDAQIAKPYLFLLLLNVVGMVAGVLRLIYVGGSGEQQTIWFNLAWTLYNMVLLGATIATASETRQVRSAHRVPLDVPVTLYLPDGDVLPSRSVNFSTGGMAIMLAQPQPIEPGLPVQIGLSHRGVEQTLPAVVRQDRDGQVSIQFTQMSMEQERWLVASTFARADIWLSQWGQHDRDAFWRSMGQVLEASARGFGRLGGHIVDSARQGFRPRRAVDLES</sequence>
<name>BCSA_XANAC</name>
<protein>
    <recommendedName>
        <fullName>Cellulose synthase catalytic subunit [UDP-forming]</fullName>
        <ecNumber>2.4.1.12</ecNumber>
    </recommendedName>
</protein>
<comment type="function">
    <text evidence="1">Catalytic subunit of cellulose synthase. It polymerizes uridine 5'-diphosphate glucose to cellulose, which is produced as an extracellular component for mechanical and chemical protection (By similarity).</text>
</comment>
<comment type="catalytic activity">
    <reaction>
        <text>[(1-&gt;4)-beta-D-glucosyl](n) + UDP-alpha-D-glucose = [(1-&gt;4)-beta-D-glucosyl](n+1) + UDP + H(+)</text>
        <dbReference type="Rhea" id="RHEA:19929"/>
        <dbReference type="Rhea" id="RHEA-COMP:10033"/>
        <dbReference type="Rhea" id="RHEA-COMP:10034"/>
        <dbReference type="ChEBI" id="CHEBI:15378"/>
        <dbReference type="ChEBI" id="CHEBI:18246"/>
        <dbReference type="ChEBI" id="CHEBI:58223"/>
        <dbReference type="ChEBI" id="CHEBI:58885"/>
        <dbReference type="EC" id="2.4.1.12"/>
    </reaction>
</comment>
<comment type="cofactor">
    <cofactor evidence="1">
        <name>Mg(2+)</name>
        <dbReference type="ChEBI" id="CHEBI:18420"/>
    </cofactor>
</comment>
<comment type="activity regulation">
    <text evidence="1">Activated by bis-(3'-5') cyclic diguanylic acid (c-di-GMP).</text>
</comment>
<comment type="pathway">
    <text>Glycan metabolism; bacterial cellulose biosynthesis.</text>
</comment>
<comment type="subcellular location">
    <subcellularLocation>
        <location evidence="3">Cell inner membrane</location>
        <topology evidence="3">Multi-pass membrane protein</topology>
    </subcellularLocation>
</comment>
<comment type="domain">
    <text>There are two conserved domains in the globular part of the protein: the N-terminal domain (domain A) contains the conserved DXD motif and is possibly involved in catalysis and substrate binding. The C-terminal domain (domain B) contains the QXXRW motif and is present only in processive glycosyl transferases. It could be involved in the processivity function of the enzyme, possibly required for holding the growing glycan chain in the active site.</text>
</comment>
<comment type="similarity">
    <text evidence="3">Belongs to the glycosyltransferase 2 family.</text>
</comment>
<gene>
    <name type="primary">bcsA</name>
    <name type="ordered locus">XAC3518</name>
</gene>
<dbReference type="EC" id="2.4.1.12"/>
<dbReference type="EMBL" id="AE008923">
    <property type="protein sequence ID" value="AAM38361.1"/>
    <property type="molecule type" value="Genomic_DNA"/>
</dbReference>
<dbReference type="SMR" id="P58932"/>
<dbReference type="CAZy" id="GT2">
    <property type="family name" value="Glycosyltransferase Family 2"/>
</dbReference>
<dbReference type="KEGG" id="xac:XAC3518"/>
<dbReference type="eggNOG" id="COG1215">
    <property type="taxonomic scope" value="Bacteria"/>
</dbReference>
<dbReference type="HOGENOM" id="CLU_011907_5_0_6"/>
<dbReference type="UniPathway" id="UPA00694"/>
<dbReference type="Proteomes" id="UP000000576">
    <property type="component" value="Chromosome"/>
</dbReference>
<dbReference type="GO" id="GO:0005886">
    <property type="term" value="C:plasma membrane"/>
    <property type="evidence" value="ECO:0007669"/>
    <property type="project" value="UniProtKB-SubCell"/>
</dbReference>
<dbReference type="GO" id="GO:0016760">
    <property type="term" value="F:cellulose synthase (UDP-forming) activity"/>
    <property type="evidence" value="ECO:0007669"/>
    <property type="project" value="UniProtKB-EC"/>
</dbReference>
<dbReference type="GO" id="GO:0035438">
    <property type="term" value="F:cyclic-di-GMP binding"/>
    <property type="evidence" value="ECO:0007669"/>
    <property type="project" value="InterPro"/>
</dbReference>
<dbReference type="GO" id="GO:0030244">
    <property type="term" value="P:cellulose biosynthetic process"/>
    <property type="evidence" value="ECO:0007669"/>
    <property type="project" value="UniProtKB-KW"/>
</dbReference>
<dbReference type="GO" id="GO:0006011">
    <property type="term" value="P:UDP-alpha-D-glucose metabolic process"/>
    <property type="evidence" value="ECO:0007669"/>
    <property type="project" value="InterPro"/>
</dbReference>
<dbReference type="CDD" id="cd06421">
    <property type="entry name" value="CESA_CelA_like"/>
    <property type="match status" value="1"/>
</dbReference>
<dbReference type="Gene3D" id="2.40.10.220">
    <property type="entry name" value="predicted glycosyltransferase like domains"/>
    <property type="match status" value="1"/>
</dbReference>
<dbReference type="Gene3D" id="3.90.550.10">
    <property type="entry name" value="Spore Coat Polysaccharide Biosynthesis Protein SpsA, Chain A"/>
    <property type="match status" value="1"/>
</dbReference>
<dbReference type="InterPro" id="IPR003919">
    <property type="entry name" value="Cell_synth_A"/>
</dbReference>
<dbReference type="InterPro" id="IPR005150">
    <property type="entry name" value="Cellulose_synth"/>
</dbReference>
<dbReference type="InterPro" id="IPR001173">
    <property type="entry name" value="Glyco_trans_2-like"/>
</dbReference>
<dbReference type="InterPro" id="IPR050321">
    <property type="entry name" value="Glycosyltr_2/OpgH_subfam"/>
</dbReference>
<dbReference type="InterPro" id="IPR029044">
    <property type="entry name" value="Nucleotide-diphossugar_trans"/>
</dbReference>
<dbReference type="InterPro" id="IPR009875">
    <property type="entry name" value="PilZ_domain"/>
</dbReference>
<dbReference type="NCBIfam" id="TIGR03030">
    <property type="entry name" value="CelA"/>
    <property type="match status" value="1"/>
</dbReference>
<dbReference type="NCBIfam" id="NF008558">
    <property type="entry name" value="PRK11498.1"/>
    <property type="match status" value="1"/>
</dbReference>
<dbReference type="PANTHER" id="PTHR43867">
    <property type="entry name" value="CELLULOSE SYNTHASE CATALYTIC SUBUNIT A [UDP-FORMING]"/>
    <property type="match status" value="1"/>
</dbReference>
<dbReference type="PANTHER" id="PTHR43867:SF2">
    <property type="entry name" value="CELLULOSE SYNTHASE CATALYTIC SUBUNIT A [UDP-FORMING]"/>
    <property type="match status" value="1"/>
</dbReference>
<dbReference type="Pfam" id="PF03552">
    <property type="entry name" value="Cellulose_synt"/>
    <property type="match status" value="1"/>
</dbReference>
<dbReference type="Pfam" id="PF00535">
    <property type="entry name" value="Glycos_transf_2"/>
    <property type="match status" value="1"/>
</dbReference>
<dbReference type="Pfam" id="PF07238">
    <property type="entry name" value="PilZ"/>
    <property type="match status" value="1"/>
</dbReference>
<dbReference type="PRINTS" id="PR01439">
    <property type="entry name" value="CELLSNTHASEA"/>
</dbReference>
<dbReference type="SUPFAM" id="SSF53448">
    <property type="entry name" value="Nucleotide-diphospho-sugar transferases"/>
    <property type="match status" value="1"/>
</dbReference>
<dbReference type="SUPFAM" id="SSF141371">
    <property type="entry name" value="PilZ domain-like"/>
    <property type="match status" value="1"/>
</dbReference>
<accession>P58932</accession>
<evidence type="ECO:0000250" key="1"/>
<evidence type="ECO:0000255" key="2"/>
<evidence type="ECO:0000305" key="3"/>
<keyword id="KW-0973">c-di-GMP</keyword>
<keyword id="KW-0997">Cell inner membrane</keyword>
<keyword id="KW-1003">Cell membrane</keyword>
<keyword id="KW-0135">Cellulose biosynthesis</keyword>
<keyword id="KW-0328">Glycosyltransferase</keyword>
<keyword id="KW-0472">Membrane</keyword>
<keyword id="KW-0808">Transferase</keyword>
<keyword id="KW-0812">Transmembrane</keyword>
<keyword id="KW-1133">Transmembrane helix</keyword>